<feature type="chain" id="PRO_0000448180" description="Protein OPG068">
    <location>
        <begin position="1"/>
        <end position="567"/>
    </location>
</feature>
<keyword id="KW-1035">Host cytoplasm</keyword>
<keyword id="KW-0426">Late protein</keyword>
<keyword id="KW-0946">Virion</keyword>
<organismHost>
    <name type="scientific">Homo sapiens</name>
    <name type="common">Human</name>
    <dbReference type="NCBI Taxonomy" id="9606"/>
</organismHost>
<proteinExistence type="inferred from homology"/>
<accession>P0DSX2</accession>
<accession>P33819</accession>
<evidence type="ECO:0000250" key="1">
    <source>
        <dbReference type="UniProtKB" id="P21607"/>
    </source>
</evidence>
<evidence type="ECO:0000305" key="2"/>
<organism>
    <name type="scientific">Variola virus</name>
    <dbReference type="NCBI Taxonomy" id="10255"/>
    <lineage>
        <taxon>Viruses</taxon>
        <taxon>Varidnaviria</taxon>
        <taxon>Bamfordvirae</taxon>
        <taxon>Nucleocytoviricota</taxon>
        <taxon>Pokkesviricetes</taxon>
        <taxon>Chitovirales</taxon>
        <taxon>Poxviridae</taxon>
        <taxon>Chordopoxvirinae</taxon>
        <taxon>Orthopoxvirus</taxon>
    </lineage>
</organism>
<sequence>MDFIRRKYLIYTVENNIDFLKDDTLSKVNNFTLNHVLALKYLVSNFPQHVITKDVLANTNFFVFIHMVRCCKVYEAVLRHAFDAPTLYVKALTKNYLSFSNAIQSYKETVHKLTQDEKFLEVAEYMEELGELIGVNYDLVLNPLFHGGEPIKDMEIIFLKLFKKTDFKVVKKLSVIRLLIWAYLSKKDTGIEFADNDRQDIYTLFQHTGRIVHSNLTETFRDYIFPGDKTSYWVWLNESIANDADIVLNRPAITMYDKILSYIYSEIKQGRVNKNMLKLVYIFEPEKDIRELLLEIIYDIPGDILSIIDAKNDDWKKYFISFYKANFINGNTFISDRTFNEDLFRVVVQIDPEYFDNERIMSLFSTSAVEIKRFDELDINNSYISNIIYEVNDITLDTMDDMKKCQIFNEDTSYYVKEYNTYLFLNETDPMVIENGILKKLSSIKSKSRRLNLFSKNILKYYLDGQLARLGLVLDDYKGDLLVKMINHLKFVEDVSAFVRFSTDKNPSVLPSLINTILASYNISIIVLFQKFLRDNLYHVEKFLDKSIHLTKTDKKYILQLIRHGRS</sequence>
<dbReference type="EMBL" id="L22579">
    <property type="protein sequence ID" value="AAA60795.1"/>
    <property type="molecule type" value="Genomic_DNA"/>
</dbReference>
<dbReference type="PIR" id="T28485">
    <property type="entry name" value="T28485"/>
</dbReference>
<dbReference type="RefSeq" id="NP_042091.1">
    <property type="nucleotide sequence ID" value="NC_001611.1"/>
</dbReference>
<dbReference type="GeneID" id="1486412"/>
<dbReference type="KEGG" id="vg:1486412"/>
<dbReference type="Proteomes" id="UP000119805">
    <property type="component" value="Segment"/>
</dbReference>
<dbReference type="GO" id="GO:0030430">
    <property type="term" value="C:host cell cytoplasm"/>
    <property type="evidence" value="ECO:0007669"/>
    <property type="project" value="UniProtKB-SubCell"/>
</dbReference>
<dbReference type="GO" id="GO:0044423">
    <property type="term" value="C:virion component"/>
    <property type="evidence" value="ECO:0007669"/>
    <property type="project" value="UniProtKB-KW"/>
</dbReference>
<dbReference type="InterPro" id="IPR006749">
    <property type="entry name" value="Pox_E6"/>
</dbReference>
<dbReference type="Pfam" id="PF04656">
    <property type="entry name" value="Pox_E6"/>
    <property type="match status" value="1"/>
</dbReference>
<dbReference type="PIRSF" id="PIRSF015629">
    <property type="entry name" value="VAC_E6R"/>
    <property type="match status" value="1"/>
</dbReference>
<protein>
    <recommendedName>
        <fullName>Protein OPG068</fullName>
    </recommendedName>
    <alternativeName>
        <fullName>Protein E6</fullName>
    </alternativeName>
</protein>
<reference key="1">
    <citation type="journal article" date="1993" name="Nature">
        <title>Potential virulence determinants in terminal regions of variola smallpox virus genome.</title>
        <authorList>
            <person name="Massung R.F."/>
            <person name="Esposito J.J."/>
            <person name="Liu L.I."/>
            <person name="Qi J."/>
            <person name="Utterback T.R."/>
            <person name="Knight J.C."/>
            <person name="Aubin L."/>
            <person name="Yuran T.E."/>
            <person name="Parsons J.M."/>
            <person name="Loparev V.N."/>
            <person name="Selivanov N.A."/>
            <person name="Cavallaro K.F."/>
            <person name="Kerlavage A.R."/>
            <person name="Mahy B.W.J."/>
            <person name="Venter J.C."/>
        </authorList>
    </citation>
    <scope>NUCLEOTIDE SEQUENCE [GENOMIC DNA]</scope>
    <source>
        <strain>Bangladesh-1975</strain>
    </source>
</reference>
<gene>
    <name type="primary">OPG068</name>
    <name type="synonym">E6R</name>
</gene>
<name>PG068_VARV</name>
<comment type="function">
    <text evidence="1">Plays an essential role for maintaining proper localization of the seven-protein complex and the viroplasm during assembly.</text>
</comment>
<comment type="subcellular location">
    <subcellularLocation>
        <location evidence="1">Virion</location>
    </subcellularLocation>
    <subcellularLocation>
        <location evidence="1">Host cytoplasm</location>
    </subcellularLocation>
    <text evidence="1">Localizes in viroplasm and in the mature virion (MV).</text>
</comment>
<comment type="induction">
    <text evidence="1">Expressed in the intermediate phase of the viral replicative cycle.</text>
</comment>
<comment type="similarity">
    <text evidence="2">Belongs to the orthopoxvirus OPG068 family.</text>
</comment>